<organism>
    <name type="scientific">Bos taurus</name>
    <name type="common">Bovine</name>
    <dbReference type="NCBI Taxonomy" id="9913"/>
    <lineage>
        <taxon>Eukaryota</taxon>
        <taxon>Metazoa</taxon>
        <taxon>Chordata</taxon>
        <taxon>Craniata</taxon>
        <taxon>Vertebrata</taxon>
        <taxon>Euteleostomi</taxon>
        <taxon>Mammalia</taxon>
        <taxon>Eutheria</taxon>
        <taxon>Laurasiatheria</taxon>
        <taxon>Artiodactyla</taxon>
        <taxon>Ruminantia</taxon>
        <taxon>Pecora</taxon>
        <taxon>Bovidae</taxon>
        <taxon>Bovinae</taxon>
        <taxon>Bos</taxon>
    </lineage>
</organism>
<name>TGFA1_BOVIN</name>
<reference key="1">
    <citation type="submission" date="2007-07" db="EMBL/GenBank/DDBJ databases">
        <authorList>
            <consortium name="NIH - Mammalian Gene Collection (MGC) project"/>
        </authorList>
    </citation>
    <scope>NUCLEOTIDE SEQUENCE [LARGE SCALE MRNA]</scope>
    <source>
        <strain>Hereford</strain>
        <tissue>Thymus</tissue>
    </source>
</reference>
<proteinExistence type="evidence at transcript level"/>
<accession>A7MB11</accession>
<feature type="chain" id="PRO_0000345404" description="Transforming growth factor-beta receptor-associated protein 1">
    <location>
        <begin position="1"/>
        <end position="859"/>
    </location>
</feature>
<feature type="domain" description="CNH" evidence="3">
    <location>
        <begin position="24"/>
        <end position="297"/>
    </location>
</feature>
<feature type="repeat" description="CHCR">
    <location>
        <begin position="563"/>
        <end position="727"/>
    </location>
</feature>
<gene>
    <name type="primary">TGFBRAP1</name>
</gene>
<keyword id="KW-0963">Cytoplasm</keyword>
<keyword id="KW-0967">Endosome</keyword>
<keyword id="KW-0653">Protein transport</keyword>
<keyword id="KW-1185">Reference proteome</keyword>
<keyword id="KW-0813">Transport</keyword>
<evidence type="ECO:0000250" key="1">
    <source>
        <dbReference type="UniProtKB" id="Q3UR70"/>
    </source>
</evidence>
<evidence type="ECO:0000250" key="2">
    <source>
        <dbReference type="UniProtKB" id="Q8WUH2"/>
    </source>
</evidence>
<evidence type="ECO:0000255" key="3">
    <source>
        <dbReference type="PROSITE-ProRule" id="PRU00795"/>
    </source>
</evidence>
<evidence type="ECO:0000305" key="4"/>
<protein>
    <recommendedName>
        <fullName>Transforming growth factor-beta receptor-associated protein 1</fullName>
        <shortName>TGF-beta receptor-associated protein 1</shortName>
        <shortName>TRAP-1</shortName>
        <shortName>TRAP1</shortName>
    </recommendedName>
</protein>
<dbReference type="EMBL" id="BC151278">
    <property type="protein sequence ID" value="AAI51279.1"/>
    <property type="molecule type" value="mRNA"/>
</dbReference>
<dbReference type="RefSeq" id="NP_001095478.1">
    <property type="nucleotide sequence ID" value="NM_001102008.1"/>
</dbReference>
<dbReference type="SMR" id="A7MB11"/>
<dbReference type="FunCoup" id="A7MB11">
    <property type="interactions" value="2563"/>
</dbReference>
<dbReference type="STRING" id="9913.ENSBTAP00000028967"/>
<dbReference type="PaxDb" id="9913-ENSBTAP00000028967"/>
<dbReference type="GeneID" id="514660"/>
<dbReference type="KEGG" id="bta:514660"/>
<dbReference type="CTD" id="9392"/>
<dbReference type="eggNOG" id="KOG2063">
    <property type="taxonomic scope" value="Eukaryota"/>
</dbReference>
<dbReference type="InParanoid" id="A7MB11"/>
<dbReference type="OrthoDB" id="10258882at2759"/>
<dbReference type="Proteomes" id="UP000009136">
    <property type="component" value="Unplaced"/>
</dbReference>
<dbReference type="GO" id="GO:0005737">
    <property type="term" value="C:cytoplasm"/>
    <property type="evidence" value="ECO:0000318"/>
    <property type="project" value="GO_Central"/>
</dbReference>
<dbReference type="GO" id="GO:0005769">
    <property type="term" value="C:early endosome"/>
    <property type="evidence" value="ECO:0007669"/>
    <property type="project" value="UniProtKB-SubCell"/>
</dbReference>
<dbReference type="GO" id="GO:0016020">
    <property type="term" value="C:membrane"/>
    <property type="evidence" value="ECO:0000318"/>
    <property type="project" value="GO_Central"/>
</dbReference>
<dbReference type="GO" id="GO:0006914">
    <property type="term" value="P:autophagy"/>
    <property type="evidence" value="ECO:0000318"/>
    <property type="project" value="GO_Central"/>
</dbReference>
<dbReference type="GO" id="GO:0034058">
    <property type="term" value="P:endosomal vesicle fusion"/>
    <property type="evidence" value="ECO:0000318"/>
    <property type="project" value="GO_Central"/>
</dbReference>
<dbReference type="GO" id="GO:0006886">
    <property type="term" value="P:intracellular protein transport"/>
    <property type="evidence" value="ECO:0007669"/>
    <property type="project" value="InterPro"/>
</dbReference>
<dbReference type="InterPro" id="IPR000547">
    <property type="entry name" value="Clathrin_H-chain/VPS_repeat"/>
</dbReference>
<dbReference type="InterPro" id="IPR001180">
    <property type="entry name" value="CNH_dom"/>
</dbReference>
<dbReference type="InterPro" id="IPR032914">
    <property type="entry name" value="Vam6/VPS39/TRAP1"/>
</dbReference>
<dbReference type="InterPro" id="IPR019452">
    <property type="entry name" value="VPS39/TGF_beta_rcpt-assoc_1"/>
</dbReference>
<dbReference type="InterPro" id="IPR019453">
    <property type="entry name" value="VPS39/TGFA1_Znf"/>
</dbReference>
<dbReference type="PANTHER" id="PTHR12894">
    <property type="entry name" value="CNH DOMAIN CONTAINING"/>
    <property type="match status" value="1"/>
</dbReference>
<dbReference type="PANTHER" id="PTHR12894:SF27">
    <property type="entry name" value="TRANSFORMING GROWTH FACTOR-BETA RECEPTOR-ASSOCIATED PROTEIN 1"/>
    <property type="match status" value="1"/>
</dbReference>
<dbReference type="Pfam" id="PF00780">
    <property type="entry name" value="CNH"/>
    <property type="match status" value="1"/>
</dbReference>
<dbReference type="Pfam" id="PF10366">
    <property type="entry name" value="Vps39_1"/>
    <property type="match status" value="1"/>
</dbReference>
<dbReference type="Pfam" id="PF10367">
    <property type="entry name" value="zf-Vps39_C"/>
    <property type="match status" value="1"/>
</dbReference>
<dbReference type="PROSITE" id="PS50236">
    <property type="entry name" value="CHCR"/>
    <property type="match status" value="1"/>
</dbReference>
<dbReference type="PROSITE" id="PS50219">
    <property type="entry name" value="CNH"/>
    <property type="match status" value="1"/>
</dbReference>
<sequence length="859" mass="97006">MMSTKAFTLVPAIEREQLLSDRDRGLLECVECCGRNLYVGTSDCFVYHFLLEEKTLPGGSATFTATRQLHRHLGFKKAVSELRAASALSRLLVLCDGCISLVHMLSLEPVPSGARIKGATAFALNENPVSGDPFCVEVCIISVKRRTIQVFLVYEDRVQIVREVSTPEQPLAVAVDGHFLCLALTTQYIILNYSTGAAQDLFPFCSEERRPIVKRIGRQEFLLAGPGGLGMFATVAGISQRAPVRWSENVIGAAVCFPYVVALDDEFITVHSMLDQQQKQTLPFKEGHILQDFEGRVIVATSKGVYILVPLPLEKRIQDLLASHRVEEALVLAKGARRNIPKEKFQVMYRRILLQAGFIQFAQLQFLKAKELFRSGQLDVRELISLYPLLLPTSSSFTRSHPPLHEFADLNQLTQGDQDKVAKCKRFLMSYLNEVRSTEVANGYKEDIDTALLKLYAEADHDSLLDLLVTENFCLLPDSAAWLEKHKKYFALGLLYHYNHQDAAAVQLWVSIVNGDIQDSTRSDLYEYIVDFLTYSTDPDLVWRHADWVLQRSQEVGVQVFTKRPLDEQQSGFNPDDIISCLKKYPQALVKYLEHLVTERRLQKEEYHTHLAVLYLDEVLQQRPCTPDKDAEVTETQAKLRRLLQESDLYRVHFLMDRTRGAGLPLESAILHGKLEQHEEALHILVHELADFPAAEDYCLWRSEGRDPPYRQRLFHLLLAVYLGPGPAAPARTVAAVDLLNRHAVEFDAAQVLQLLPGTWSVQLLRPFLMGAMRDSIHARRTTQVAVGLARSENLIYKYDKMKLKGSSVRLSDEKLCQMCQNPFLEPVFVRYPNGGLVHTHCAASRHTEPSSPSAGART</sequence>
<comment type="function">
    <text evidence="2">Plays a role in the TGF-beta/activin signaling pathway. It associates with inactive heteromeric TGF-beta and activin receptor complexes, mainly through the type II receptor, and is released upon activation of signaling. May recruit SMAD4 to the vicinity of the receptor complex and facilitate its interaction with receptor-regulated Smads, such as SMAD2 (By similarity).</text>
</comment>
<comment type="function">
    <text evidence="2">Plays a role in vesicle-mediated protein trafficking of the endocytic membrane transport pathway. Believed to act as a component of the putative CORVET endosomal tethering complexes which is proposed to be involved in the Rab5-to-Rab7 endosome conversion probably implicating MON1A/B, and via binding SNAREs and SNARE complexes to mediate tethering and docking events during SNARE-mediated membrane fusion. The CORVET complex is proposed to function as a Rab5 effector to mediate early endosome fusion probably in specific endosome subpopulations. Functions predominantly in APPL1-containing endosomes and in degradative but not recycling trafficking of endocytosed cargo (By similarity).</text>
</comment>
<comment type="subunit">
    <text evidence="1 2">Interacts with TGFBR2 and ACVR2B; in the absence of ligand stimulation. Interacts with TGFBR1, ACVRL1, BMPR1A and ACVR1B; in the absence of ligand stimulation and to a less extent. Interacts with SMAD4; the interaction seems to be mutually exclusive with the interaction of SMAD4 and phosphorylated SMAD2. May interact with ALOX5. Interacts with RAB5C. Interacts with VPS8, VPS11 and VPS16. Component of the putative class C core vacuole/endosome tethering (CORVET) complex; the core of which composed of the class C Vps proteins VPS11, VPS16, VPS18 and VPS33A, is associated with VPS8 and TGFBRAP1 (By similarity).</text>
</comment>
<comment type="subcellular location">
    <subcellularLocation>
        <location>Cytoplasm</location>
    </subcellularLocation>
    <subcellularLocation>
        <location evidence="2">Early endosome</location>
    </subcellularLocation>
    <text evidence="2">Colocalizes with TGF-beta receptors in the absence of signaling.</text>
</comment>
<comment type="similarity">
    <text evidence="4">Belongs to the TRAP1 family.</text>
</comment>